<protein>
    <recommendedName>
        <fullName evidence="1">Non-structural protein 1</fullName>
        <shortName evidence="1">NSP1</shortName>
    </recommendedName>
    <alternativeName>
        <fullName evidence="1">NCVP2</fullName>
    </alternativeName>
    <alternativeName>
        <fullName evidence="1">Non-structural RNA-binding protein 53</fullName>
        <shortName evidence="1">NS53</shortName>
    </alternativeName>
</protein>
<sequence>MATFKDACFHYRKITKLNRELLRIGANSVWTSVQSNKIKGWCVECCQLTELTYCSGCSLAHVCQLCITNKRCFLDSQPHLLKLRTFESPITKEKLQCVINLYDKLFPINNTIINKFKKSTRQRKCRNGLNETWYNQLLLPITLNAAVFKFKTRTVYVFGFYEGSVSVENLPYRIINCIDIYDRLLLDQINFERMNSLPVSLQSIYAQKYFRVSRIPSMKLRQIYYSDFTKQNLITKYRTKSRIVHRNISKINWNTEIELHNTLTHNKNKILEILSTSIERQFLVHDINLGRVKADMFELGHQCKPNYVSSNHWQPASKISVCKWCNIKYAFKDMDWRMESMYNELMSFIQACYKSNTNVDHCSSIESIYPIIRNVYWHSTTNYIDETLNKLFSMMNPVCIDSQSVINFHCQIDLSLYLHIKMILEMEVLPFILNVNQFKDIIKGIMNQWCNFSKLSELPLCIESTTTLLELEKQGKLSEEYDLLISDSDDD</sequence>
<accession>O39821</accession>
<reference key="1">
    <citation type="journal article" date="1996" name="Arch. Virol.">
        <title>Species-specific and interspecies relatedness of NSP1 sequences in human, porcine, bovine, feline, and equine rotavirus strains.</title>
        <authorList>
            <person name="Kojima K."/>
            <person name="Taniguchi K."/>
            <person name="Kobayashi N."/>
        </authorList>
    </citation>
    <scope>NUCLEOTIDE SEQUENCE [GENOMIC RNA]</scope>
</reference>
<organism>
    <name type="scientific">Rotavirus A (isolate RVA/Equine/United Kingdom/H2/1976/G3P4[12])</name>
    <name type="common">RV-A</name>
    <name type="synonym">Rotavirus A (isolate H-2)</name>
    <dbReference type="NCBI Taxonomy" id="10939"/>
    <lineage>
        <taxon>Viruses</taxon>
        <taxon>Riboviria</taxon>
        <taxon>Orthornavirae</taxon>
        <taxon>Duplornaviricota</taxon>
        <taxon>Resentoviricetes</taxon>
        <taxon>Reovirales</taxon>
        <taxon>Sedoreoviridae</taxon>
        <taxon>Rotavirus</taxon>
        <taxon>Equine rotavirus</taxon>
    </lineage>
</organism>
<name>NSP1_ROTEH</name>
<proteinExistence type="inferred from homology"/>
<evidence type="ECO:0000255" key="1">
    <source>
        <dbReference type="HAMAP-Rule" id="MF_04088"/>
    </source>
</evidence>
<feature type="chain" id="PRO_0000369071" description="Non-structural protein 1">
    <location>
        <begin position="1"/>
        <end position="491"/>
    </location>
</feature>
<feature type="region of interest" description="RNA-binding" evidence="1">
    <location>
        <begin position="1"/>
        <end position="81"/>
    </location>
</feature>
<feature type="region of interest" description="Zinc-binding domain" evidence="1">
    <location>
        <begin position="42"/>
        <end position="79"/>
    </location>
</feature>
<feature type="region of interest" description="Important for cytoskeleton localization" evidence="1">
    <location>
        <begin position="82"/>
        <end position="176"/>
    </location>
</feature>
<feature type="region of interest" description="Interaction with host IRF3" evidence="1">
    <location>
        <begin position="318"/>
        <end position="491"/>
    </location>
</feature>
<feature type="short sequence motif" description="pLxIS motif" evidence="1">
    <location>
        <begin position="483"/>
        <end position="486"/>
    </location>
</feature>
<dbReference type="EMBL" id="D38157">
    <property type="protein sequence ID" value="BAA20548.1"/>
    <property type="molecule type" value="Genomic_RNA"/>
</dbReference>
<dbReference type="GO" id="GO:0030430">
    <property type="term" value="C:host cell cytoplasm"/>
    <property type="evidence" value="ECO:0007669"/>
    <property type="project" value="UniProtKB-UniRule"/>
</dbReference>
<dbReference type="GO" id="GO:0044163">
    <property type="term" value="C:host cytoskeleton"/>
    <property type="evidence" value="ECO:0007669"/>
    <property type="project" value="UniProtKB-SubCell"/>
</dbReference>
<dbReference type="GO" id="GO:0046872">
    <property type="term" value="F:metal ion binding"/>
    <property type="evidence" value="ECO:0007669"/>
    <property type="project" value="UniProtKB-UniRule"/>
</dbReference>
<dbReference type="GO" id="GO:0003723">
    <property type="term" value="F:RNA binding"/>
    <property type="evidence" value="ECO:0007669"/>
    <property type="project" value="UniProtKB-UniRule"/>
</dbReference>
<dbReference type="GO" id="GO:0039548">
    <property type="term" value="P:symbiont-mediated suppression of host cytoplasmic pattern recognition receptor signaling pathway via inhibition of IRF3 activity"/>
    <property type="evidence" value="ECO:0007669"/>
    <property type="project" value="UniProtKB-UniRule"/>
</dbReference>
<dbReference type="GO" id="GO:0039557">
    <property type="term" value="P:symbiont-mediated suppression of host cytoplasmic pattern recognition receptor signaling pathway via inhibition of IRF7 activity"/>
    <property type="evidence" value="ECO:0007669"/>
    <property type="project" value="UniProtKB-UniRule"/>
</dbReference>
<dbReference type="HAMAP" id="MF_04088">
    <property type="entry name" value="ROTA_NSP1"/>
    <property type="match status" value="1"/>
</dbReference>
<dbReference type="InterPro" id="IPR002148">
    <property type="entry name" value="Rotavirus_NSP1"/>
</dbReference>
<dbReference type="Pfam" id="PF00981">
    <property type="entry name" value="Rota_NS53"/>
    <property type="match status" value="1"/>
</dbReference>
<comment type="function">
    <text evidence="1">Plays a role in the inhibition of host innate immunity by inducing the degradation of key host factors required to activate interferon production such as IRF3, IRF5 or IRF7. Associates with components of cullin RING ligases (CRLs) including CUL1 or CUL3, which are essential multisubunit ubiquitination complexes, to modulate their activities.</text>
</comment>
<comment type="subunit">
    <text evidence="1">Interacts (via C-terminus) with host IRF3; this interaction leads to IRF3 degradation. Interacts with host IRF7; this interaction leads to IRF7 degradation. Interacts with host CUL1 and CUL3.</text>
</comment>
<comment type="subcellular location">
    <subcellularLocation>
        <location evidence="1">Host cytoplasm</location>
        <location evidence="1">Host cytoskeleton</location>
    </subcellularLocation>
</comment>
<comment type="domain">
    <text evidence="1">The integrity of the zinc-binding domain in NSP1 is important for degradation of host IRF3.</text>
</comment>
<comment type="domain">
    <text evidence="1">The pLxIS motif targets host IRF3 for degradation; however phosphorylation of NSP1 pLxIS motif is not required for its activity.</text>
</comment>
<comment type="similarity">
    <text evidence="1">Belongs to the rotavirus NSP1 family.</text>
</comment>
<keyword id="KW-1035">Host cytoplasm</keyword>
<keyword id="KW-1037">Host cytoskeleton</keyword>
<keyword id="KW-0945">Host-virus interaction</keyword>
<keyword id="KW-1090">Inhibition of host innate immune response by virus</keyword>
<keyword id="KW-1092">Inhibition of host IRF3 by virus</keyword>
<keyword id="KW-1093">Inhibition of host IRF7 by virus</keyword>
<keyword id="KW-1113">Inhibition of host RLR pathway by virus</keyword>
<keyword id="KW-0922">Interferon antiviral system evasion</keyword>
<keyword id="KW-0479">Metal-binding</keyword>
<keyword id="KW-0694">RNA-binding</keyword>
<keyword id="KW-0899">Viral immunoevasion</keyword>
<organismHost>
    <name type="scientific">Equus caballus</name>
    <name type="common">Horse</name>
    <dbReference type="NCBI Taxonomy" id="9796"/>
</organismHost>